<comment type="function">
    <text evidence="1">Protein modifier that is covalently attached to lysine residues of substrate proteins, thereby targeting them for proteasomal degradation. The tagging system is termed pupylation.</text>
</comment>
<comment type="pathway">
    <text evidence="1">Protein degradation; proteasomal Pup-dependent pathway.</text>
</comment>
<comment type="subunit">
    <text evidence="1">Strongly interacts with the proteasome-associated ATPase ARC through a hydrophobic interface; the interacting region of Pup lies in its C-terminal half. There is one Pup binding site per ARC hexamer ring.</text>
</comment>
<comment type="domain">
    <text evidence="1">The N-terminal unstructured half of Pup provides a signal required to initiate unfolding and degradation by the proteasome but is not needed for pupylation, while the C-terminal helical half of Pup interacts with ARC to target proteins to the proteasome.</text>
</comment>
<comment type="similarity">
    <text evidence="1">Belongs to the prokaryotic ubiquitin-like protein family.</text>
</comment>
<protein>
    <recommendedName>
        <fullName evidence="1">Prokaryotic ubiquitin-like protein Pup</fullName>
    </recommendedName>
    <alternativeName>
        <fullName evidence="1">Bacterial ubiquitin-like modifier</fullName>
    </alternativeName>
</protein>
<gene>
    <name evidence="1" type="primary">pup</name>
    <name type="ordered locus">SCO1646</name>
    <name type="ORF">SCI41.29c</name>
</gene>
<keyword id="KW-0175">Coiled coil</keyword>
<keyword id="KW-1017">Isopeptide bond</keyword>
<keyword id="KW-1185">Reference proteome</keyword>
<keyword id="KW-0833">Ubl conjugation pathway</keyword>
<name>PUP_STRCO</name>
<proteinExistence type="inferred from homology"/>
<evidence type="ECO:0000255" key="1">
    <source>
        <dbReference type="HAMAP-Rule" id="MF_02106"/>
    </source>
</evidence>
<evidence type="ECO:0000256" key="2">
    <source>
        <dbReference type="SAM" id="MobiDB-lite"/>
    </source>
</evidence>
<reference key="1">
    <citation type="journal article" date="1998" name="J. Bacteriol.">
        <title>The 20S proteasome of Streptomyces coelicolor.</title>
        <authorList>
            <person name="Nagy I."/>
            <person name="Tamura T."/>
            <person name="Vanderleyden J."/>
            <person name="Baumeister W."/>
            <person name="De Mot R."/>
        </authorList>
    </citation>
    <scope>NUCLEOTIDE SEQUENCE [GENOMIC DNA]</scope>
    <source>
        <strain>ATCC BAA-471 / A3(2) / M145</strain>
    </source>
</reference>
<reference key="2">
    <citation type="journal article" date="2002" name="Nature">
        <title>Complete genome sequence of the model actinomycete Streptomyces coelicolor A3(2).</title>
        <authorList>
            <person name="Bentley S.D."/>
            <person name="Chater K.F."/>
            <person name="Cerdeno-Tarraga A.-M."/>
            <person name="Challis G.L."/>
            <person name="Thomson N.R."/>
            <person name="James K.D."/>
            <person name="Harris D.E."/>
            <person name="Quail M.A."/>
            <person name="Kieser H."/>
            <person name="Harper D."/>
            <person name="Bateman A."/>
            <person name="Brown S."/>
            <person name="Chandra G."/>
            <person name="Chen C.W."/>
            <person name="Collins M."/>
            <person name="Cronin A."/>
            <person name="Fraser A."/>
            <person name="Goble A."/>
            <person name="Hidalgo J."/>
            <person name="Hornsby T."/>
            <person name="Howarth S."/>
            <person name="Huang C.-H."/>
            <person name="Kieser T."/>
            <person name="Larke L."/>
            <person name="Murphy L.D."/>
            <person name="Oliver K."/>
            <person name="O'Neil S."/>
            <person name="Rabbinowitsch E."/>
            <person name="Rajandream M.A."/>
            <person name="Rutherford K.M."/>
            <person name="Rutter S."/>
            <person name="Seeger K."/>
            <person name="Saunders D."/>
            <person name="Sharp S."/>
            <person name="Squares R."/>
            <person name="Squares S."/>
            <person name="Taylor K."/>
            <person name="Warren T."/>
            <person name="Wietzorrek A."/>
            <person name="Woodward J.R."/>
            <person name="Barrell B.G."/>
            <person name="Parkhill J."/>
            <person name="Hopwood D.A."/>
        </authorList>
    </citation>
    <scope>NUCLEOTIDE SEQUENCE [LARGE SCALE GENOMIC DNA]</scope>
    <source>
        <strain>ATCC BAA-471 / A3(2) / M145</strain>
    </source>
</reference>
<organism>
    <name type="scientific">Streptomyces coelicolor (strain ATCC BAA-471 / A3(2) / M145)</name>
    <dbReference type="NCBI Taxonomy" id="100226"/>
    <lineage>
        <taxon>Bacteria</taxon>
        <taxon>Bacillati</taxon>
        <taxon>Actinomycetota</taxon>
        <taxon>Actinomycetes</taxon>
        <taxon>Kitasatosporales</taxon>
        <taxon>Streptomycetaceae</taxon>
        <taxon>Streptomyces</taxon>
        <taxon>Streptomyces albidoflavus group</taxon>
    </lineage>
</organism>
<feature type="chain" id="PRO_0000390614" description="Prokaryotic ubiquitin-like protein Pup">
    <location>
        <begin position="1"/>
        <end position="72"/>
    </location>
</feature>
<feature type="region of interest" description="Disordered" evidence="2">
    <location>
        <begin position="1"/>
        <end position="45"/>
    </location>
</feature>
<feature type="region of interest" description="ARC ATPase binding" evidence="1">
    <location>
        <begin position="28"/>
        <end position="66"/>
    </location>
</feature>
<feature type="coiled-coil region" evidence="1">
    <location>
        <begin position="10"/>
        <end position="60"/>
    </location>
</feature>
<feature type="compositionally biased region" description="Gly residues" evidence="2">
    <location>
        <begin position="1"/>
        <end position="10"/>
    </location>
</feature>
<feature type="compositionally biased region" description="Basic and acidic residues" evidence="2">
    <location>
        <begin position="31"/>
        <end position="42"/>
    </location>
</feature>
<feature type="cross-link" description="Isoglutamyl lysine isopeptide (Glu-Lys) (interchain with K-? in acceptor proteins)" evidence="1">
    <location>
        <position position="72"/>
    </location>
</feature>
<dbReference type="EMBL" id="AF086832">
    <property type="protein sequence ID" value="AAC64276.1"/>
    <property type="molecule type" value="Genomic_DNA"/>
</dbReference>
<dbReference type="EMBL" id="AL939109">
    <property type="protein sequence ID" value="CAB59499.1"/>
    <property type="molecule type" value="Genomic_DNA"/>
</dbReference>
<dbReference type="RefSeq" id="NP_625921.1">
    <property type="nucleotide sequence ID" value="NC_003888.3"/>
</dbReference>
<dbReference type="RefSeq" id="WP_011027899.1">
    <property type="nucleotide sequence ID" value="NZ_VNID01000018.1"/>
</dbReference>
<dbReference type="SMR" id="Q7AKQ4"/>
<dbReference type="FunCoup" id="Q7AKQ4">
    <property type="interactions" value="1"/>
</dbReference>
<dbReference type="STRING" id="100226.gene:17759239"/>
<dbReference type="PaxDb" id="100226-SCO1646"/>
<dbReference type="KEGG" id="sco:SCO1646"/>
<dbReference type="PATRIC" id="fig|100226.15.peg.1660"/>
<dbReference type="eggNOG" id="ENOG50333JS">
    <property type="taxonomic scope" value="Bacteria"/>
</dbReference>
<dbReference type="HOGENOM" id="CLU_183816_2_0_11"/>
<dbReference type="InParanoid" id="Q7AKQ4"/>
<dbReference type="UniPathway" id="UPA00997"/>
<dbReference type="Proteomes" id="UP000001973">
    <property type="component" value="Chromosome"/>
</dbReference>
<dbReference type="GO" id="GO:0070628">
    <property type="term" value="F:proteasome binding"/>
    <property type="evidence" value="ECO:0007669"/>
    <property type="project" value="UniProtKB-UniRule"/>
</dbReference>
<dbReference type="GO" id="GO:0031386">
    <property type="term" value="F:protein tag activity"/>
    <property type="evidence" value="ECO:0007669"/>
    <property type="project" value="UniProtKB-UniRule"/>
</dbReference>
<dbReference type="GO" id="GO:0019941">
    <property type="term" value="P:modification-dependent protein catabolic process"/>
    <property type="evidence" value="ECO:0007669"/>
    <property type="project" value="UniProtKB-UniRule"/>
</dbReference>
<dbReference type="GO" id="GO:0010498">
    <property type="term" value="P:proteasomal protein catabolic process"/>
    <property type="evidence" value="ECO:0007669"/>
    <property type="project" value="UniProtKB-UniRule"/>
</dbReference>
<dbReference type="GO" id="GO:0070490">
    <property type="term" value="P:protein pupylation"/>
    <property type="evidence" value="ECO:0007669"/>
    <property type="project" value="UniProtKB-UniRule"/>
</dbReference>
<dbReference type="HAMAP" id="MF_02106">
    <property type="entry name" value="Pup"/>
    <property type="match status" value="1"/>
</dbReference>
<dbReference type="InterPro" id="IPR008515">
    <property type="entry name" value="Ubiquitin-like_Pup"/>
</dbReference>
<dbReference type="NCBIfam" id="TIGR03687">
    <property type="entry name" value="pupylate_cterm"/>
    <property type="match status" value="1"/>
</dbReference>
<dbReference type="Pfam" id="PF05639">
    <property type="entry name" value="Pup"/>
    <property type="match status" value="1"/>
</dbReference>
<sequence>MATKDTGGGQQKATRSTEEVEEQAQDAQASEDLKERQEKLSDDVDSVLDEIDDVLEENAEDFVRSFVQKGGE</sequence>
<accession>Q7AKQ4</accession>
<accession>O87596</accession>